<evidence type="ECO:0000255" key="1">
    <source>
        <dbReference type="HAMAP-Rule" id="MF_00501"/>
    </source>
</evidence>
<evidence type="ECO:0000305" key="2"/>
<name>RL31_CALS8</name>
<organism>
    <name type="scientific">Caldicellulosiruptor saccharolyticus (strain ATCC 43494 / DSM 8903 / Tp8T 6331)</name>
    <dbReference type="NCBI Taxonomy" id="351627"/>
    <lineage>
        <taxon>Bacteria</taxon>
        <taxon>Bacillati</taxon>
        <taxon>Bacillota</taxon>
        <taxon>Bacillota incertae sedis</taxon>
        <taxon>Caldicellulosiruptorales</taxon>
        <taxon>Caldicellulosiruptoraceae</taxon>
        <taxon>Caldicellulosiruptor</taxon>
    </lineage>
</organism>
<sequence length="69" mass="7974">MKEGIHLTYYHDAVVRCACGETFITGSTKKEIHVEICSKCHPFFTGKQKFVDTTGRVERFMKKYGLDQK</sequence>
<accession>A4XJM8</accession>
<feature type="chain" id="PRO_1000126576" description="Large ribosomal subunit protein bL31">
    <location>
        <begin position="1"/>
        <end position="69"/>
    </location>
</feature>
<feature type="binding site" evidence="1">
    <location>
        <position position="17"/>
    </location>
    <ligand>
        <name>Zn(2+)</name>
        <dbReference type="ChEBI" id="CHEBI:29105"/>
    </ligand>
</feature>
<feature type="binding site" evidence="1">
    <location>
        <position position="19"/>
    </location>
    <ligand>
        <name>Zn(2+)</name>
        <dbReference type="ChEBI" id="CHEBI:29105"/>
    </ligand>
</feature>
<feature type="binding site" evidence="1">
    <location>
        <position position="37"/>
    </location>
    <ligand>
        <name>Zn(2+)</name>
        <dbReference type="ChEBI" id="CHEBI:29105"/>
    </ligand>
</feature>
<feature type="binding site" evidence="1">
    <location>
        <position position="40"/>
    </location>
    <ligand>
        <name>Zn(2+)</name>
        <dbReference type="ChEBI" id="CHEBI:29105"/>
    </ligand>
</feature>
<reference key="1">
    <citation type="submission" date="2007-04" db="EMBL/GenBank/DDBJ databases">
        <title>Genome sequence of the thermophilic hydrogen-producing bacterium Caldicellulosiruptor saccharolyticus DSM 8903.</title>
        <authorList>
            <person name="Copeland A."/>
            <person name="Lucas S."/>
            <person name="Lapidus A."/>
            <person name="Barry K."/>
            <person name="Detter J.C."/>
            <person name="Glavina del Rio T."/>
            <person name="Hammon N."/>
            <person name="Israni S."/>
            <person name="Dalin E."/>
            <person name="Tice H."/>
            <person name="Pitluck S."/>
            <person name="Kiss H."/>
            <person name="Brettin T."/>
            <person name="Bruce D."/>
            <person name="Han C."/>
            <person name="Schmutz J."/>
            <person name="Larimer F."/>
            <person name="Land M."/>
            <person name="Hauser L."/>
            <person name="Kyrpides N."/>
            <person name="Lykidis A."/>
            <person name="van de Werken H.J.G."/>
            <person name="Verhaart M.R.A."/>
            <person name="VanFossen A.L."/>
            <person name="Lewis D.L."/>
            <person name="Nichols J.D."/>
            <person name="Goorissen H.P."/>
            <person name="van Niel E.W.J."/>
            <person name="Stams F.J.M."/>
            <person name="Willquist K.U."/>
            <person name="Ward D.E."/>
            <person name="van der Oost J."/>
            <person name="Kelly R.M."/>
            <person name="Kengen S.M.W."/>
            <person name="Richardson P."/>
        </authorList>
    </citation>
    <scope>NUCLEOTIDE SEQUENCE [LARGE SCALE GENOMIC DNA]</scope>
    <source>
        <strain>ATCC 43494 / DSM 8903 / Tp8T 6331</strain>
    </source>
</reference>
<comment type="function">
    <text evidence="1">Binds the 23S rRNA.</text>
</comment>
<comment type="cofactor">
    <cofactor evidence="1">
        <name>Zn(2+)</name>
        <dbReference type="ChEBI" id="CHEBI:29105"/>
    </cofactor>
    <text evidence="1">Binds 1 zinc ion per subunit.</text>
</comment>
<comment type="subunit">
    <text evidence="1">Part of the 50S ribosomal subunit.</text>
</comment>
<comment type="similarity">
    <text evidence="1">Belongs to the bacterial ribosomal protein bL31 family. Type A subfamily.</text>
</comment>
<gene>
    <name evidence="1" type="primary">rpmE</name>
    <name type="ordered locus">Csac_1520</name>
</gene>
<proteinExistence type="inferred from homology"/>
<protein>
    <recommendedName>
        <fullName evidence="1">Large ribosomal subunit protein bL31</fullName>
    </recommendedName>
    <alternativeName>
        <fullName evidence="2">50S ribosomal protein L31</fullName>
    </alternativeName>
</protein>
<dbReference type="EMBL" id="CP000679">
    <property type="protein sequence ID" value="ABP67113.1"/>
    <property type="molecule type" value="Genomic_DNA"/>
</dbReference>
<dbReference type="RefSeq" id="WP_011917048.1">
    <property type="nucleotide sequence ID" value="NC_009437.1"/>
</dbReference>
<dbReference type="STRING" id="351627.Csac_1520"/>
<dbReference type="KEGG" id="csc:Csac_1520"/>
<dbReference type="eggNOG" id="COG0254">
    <property type="taxonomic scope" value="Bacteria"/>
</dbReference>
<dbReference type="HOGENOM" id="CLU_114306_4_3_9"/>
<dbReference type="OrthoDB" id="9803251at2"/>
<dbReference type="Proteomes" id="UP000000256">
    <property type="component" value="Chromosome"/>
</dbReference>
<dbReference type="GO" id="GO:1990904">
    <property type="term" value="C:ribonucleoprotein complex"/>
    <property type="evidence" value="ECO:0007669"/>
    <property type="project" value="UniProtKB-KW"/>
</dbReference>
<dbReference type="GO" id="GO:0005840">
    <property type="term" value="C:ribosome"/>
    <property type="evidence" value="ECO:0007669"/>
    <property type="project" value="UniProtKB-KW"/>
</dbReference>
<dbReference type="GO" id="GO:0046872">
    <property type="term" value="F:metal ion binding"/>
    <property type="evidence" value="ECO:0007669"/>
    <property type="project" value="UniProtKB-KW"/>
</dbReference>
<dbReference type="GO" id="GO:0019843">
    <property type="term" value="F:rRNA binding"/>
    <property type="evidence" value="ECO:0007669"/>
    <property type="project" value="UniProtKB-KW"/>
</dbReference>
<dbReference type="GO" id="GO:0003735">
    <property type="term" value="F:structural constituent of ribosome"/>
    <property type="evidence" value="ECO:0007669"/>
    <property type="project" value="InterPro"/>
</dbReference>
<dbReference type="GO" id="GO:0006412">
    <property type="term" value="P:translation"/>
    <property type="evidence" value="ECO:0007669"/>
    <property type="project" value="UniProtKB-UniRule"/>
</dbReference>
<dbReference type="Gene3D" id="4.10.830.30">
    <property type="entry name" value="Ribosomal protein L31"/>
    <property type="match status" value="1"/>
</dbReference>
<dbReference type="HAMAP" id="MF_00501">
    <property type="entry name" value="Ribosomal_bL31_1"/>
    <property type="match status" value="1"/>
</dbReference>
<dbReference type="InterPro" id="IPR034704">
    <property type="entry name" value="Ribosomal_bL28/bL31-like_sf"/>
</dbReference>
<dbReference type="InterPro" id="IPR002150">
    <property type="entry name" value="Ribosomal_bL31"/>
</dbReference>
<dbReference type="InterPro" id="IPR027491">
    <property type="entry name" value="Ribosomal_bL31_A"/>
</dbReference>
<dbReference type="InterPro" id="IPR042105">
    <property type="entry name" value="Ribosomal_bL31_sf"/>
</dbReference>
<dbReference type="NCBIfam" id="TIGR00105">
    <property type="entry name" value="L31"/>
    <property type="match status" value="1"/>
</dbReference>
<dbReference type="NCBIfam" id="NF000612">
    <property type="entry name" value="PRK00019.1"/>
    <property type="match status" value="1"/>
</dbReference>
<dbReference type="NCBIfam" id="NF001809">
    <property type="entry name" value="PRK00528.1"/>
    <property type="match status" value="1"/>
</dbReference>
<dbReference type="PANTHER" id="PTHR33280">
    <property type="entry name" value="50S RIBOSOMAL PROTEIN L31, CHLOROPLASTIC"/>
    <property type="match status" value="1"/>
</dbReference>
<dbReference type="PANTHER" id="PTHR33280:SF1">
    <property type="entry name" value="LARGE RIBOSOMAL SUBUNIT PROTEIN BL31C"/>
    <property type="match status" value="1"/>
</dbReference>
<dbReference type="Pfam" id="PF01197">
    <property type="entry name" value="Ribosomal_L31"/>
    <property type="match status" value="1"/>
</dbReference>
<dbReference type="PRINTS" id="PR01249">
    <property type="entry name" value="RIBOSOMALL31"/>
</dbReference>
<dbReference type="SUPFAM" id="SSF143800">
    <property type="entry name" value="L28p-like"/>
    <property type="match status" value="1"/>
</dbReference>
<dbReference type="PROSITE" id="PS01143">
    <property type="entry name" value="RIBOSOMAL_L31"/>
    <property type="match status" value="1"/>
</dbReference>
<keyword id="KW-0479">Metal-binding</keyword>
<keyword id="KW-0687">Ribonucleoprotein</keyword>
<keyword id="KW-0689">Ribosomal protein</keyword>
<keyword id="KW-0694">RNA-binding</keyword>
<keyword id="KW-0699">rRNA-binding</keyword>
<keyword id="KW-0862">Zinc</keyword>